<dbReference type="EC" id="7.1.1.-" evidence="1"/>
<dbReference type="EMBL" id="AJ506156">
    <property type="protein sequence ID" value="CAD45166.1"/>
    <property type="molecule type" value="Genomic_DNA"/>
</dbReference>
<dbReference type="SMR" id="P0CC25"/>
<dbReference type="STRING" id="13333.P0CC25"/>
<dbReference type="KEGG" id="atr:2546600"/>
<dbReference type="KEGG" id="atr:2546601"/>
<dbReference type="eggNOG" id="KOG4668">
    <property type="taxonomic scope" value="Eukaryota"/>
</dbReference>
<dbReference type="OrthoDB" id="1876953at2759"/>
<dbReference type="Proteomes" id="UP000017836">
    <property type="component" value="Chloroplast"/>
</dbReference>
<dbReference type="GO" id="GO:0009535">
    <property type="term" value="C:chloroplast thylakoid membrane"/>
    <property type="evidence" value="ECO:0007669"/>
    <property type="project" value="UniProtKB-SubCell"/>
</dbReference>
<dbReference type="GO" id="GO:0008137">
    <property type="term" value="F:NADH dehydrogenase (ubiquinone) activity"/>
    <property type="evidence" value="ECO:0007669"/>
    <property type="project" value="InterPro"/>
</dbReference>
<dbReference type="GO" id="GO:0048038">
    <property type="term" value="F:quinone binding"/>
    <property type="evidence" value="ECO:0007669"/>
    <property type="project" value="UniProtKB-KW"/>
</dbReference>
<dbReference type="GO" id="GO:0042773">
    <property type="term" value="P:ATP synthesis coupled electron transport"/>
    <property type="evidence" value="ECO:0007669"/>
    <property type="project" value="InterPro"/>
</dbReference>
<dbReference type="GO" id="GO:0019684">
    <property type="term" value="P:photosynthesis, light reaction"/>
    <property type="evidence" value="ECO:0007669"/>
    <property type="project" value="UniProtKB-UniRule"/>
</dbReference>
<dbReference type="HAMAP" id="MF_00445">
    <property type="entry name" value="NDH1_NuoN_1"/>
    <property type="match status" value="1"/>
</dbReference>
<dbReference type="InterPro" id="IPR010096">
    <property type="entry name" value="NADH-Q_OxRdtase_suN/2"/>
</dbReference>
<dbReference type="InterPro" id="IPR001750">
    <property type="entry name" value="ND/Mrp_TM"/>
</dbReference>
<dbReference type="InterPro" id="IPR045693">
    <property type="entry name" value="Ndh2_N"/>
</dbReference>
<dbReference type="NCBIfam" id="TIGR01770">
    <property type="entry name" value="NDH_I_N"/>
    <property type="match status" value="1"/>
</dbReference>
<dbReference type="NCBIfam" id="NF002701">
    <property type="entry name" value="PRK02504.1"/>
    <property type="match status" value="1"/>
</dbReference>
<dbReference type="PANTHER" id="PTHR22773">
    <property type="entry name" value="NADH DEHYDROGENASE"/>
    <property type="match status" value="1"/>
</dbReference>
<dbReference type="Pfam" id="PF19530">
    <property type="entry name" value="Ndh2_N"/>
    <property type="match status" value="1"/>
</dbReference>
<dbReference type="Pfam" id="PF00361">
    <property type="entry name" value="Proton_antipo_M"/>
    <property type="match status" value="1"/>
</dbReference>
<dbReference type="PRINTS" id="PR01434">
    <property type="entry name" value="NADHDHGNASE5"/>
</dbReference>
<name>NU2C1_AMBTC</name>
<organism>
    <name type="scientific">Amborella trichopoda</name>
    <dbReference type="NCBI Taxonomy" id="13333"/>
    <lineage>
        <taxon>Eukaryota</taxon>
        <taxon>Viridiplantae</taxon>
        <taxon>Streptophyta</taxon>
        <taxon>Embryophyta</taxon>
        <taxon>Tracheophyta</taxon>
        <taxon>Spermatophyta</taxon>
        <taxon>Magnoliopsida</taxon>
        <taxon>Amborellales</taxon>
        <taxon>Amborellaceae</taxon>
        <taxon>Amborella</taxon>
    </lineage>
</organism>
<gene>
    <name evidence="1" type="primary">ndhB1</name>
</gene>
<feature type="chain" id="PRO_0000117652" description="NAD(P)H-quinone oxidoreductase subunit 2 A, chloroplastic">
    <location>
        <begin position="1"/>
        <end position="510"/>
    </location>
</feature>
<feature type="transmembrane region" description="Helical" evidence="1">
    <location>
        <begin position="24"/>
        <end position="44"/>
    </location>
</feature>
<feature type="transmembrane region" description="Helical" evidence="1">
    <location>
        <begin position="59"/>
        <end position="79"/>
    </location>
</feature>
<feature type="transmembrane region" description="Helical" evidence="1">
    <location>
        <begin position="99"/>
        <end position="119"/>
    </location>
</feature>
<feature type="transmembrane region" description="Helical" evidence="1">
    <location>
        <begin position="124"/>
        <end position="144"/>
    </location>
</feature>
<feature type="transmembrane region" description="Helical" evidence="1">
    <location>
        <begin position="149"/>
        <end position="169"/>
    </location>
</feature>
<feature type="transmembrane region" description="Helical" evidence="1">
    <location>
        <begin position="183"/>
        <end position="203"/>
    </location>
</feature>
<feature type="transmembrane region" description="Helical" evidence="1">
    <location>
        <begin position="229"/>
        <end position="249"/>
    </location>
</feature>
<feature type="transmembrane region" description="Helical" evidence="1">
    <location>
        <begin position="295"/>
        <end position="315"/>
    </location>
</feature>
<feature type="transmembrane region" description="Helical" evidence="1">
    <location>
        <begin position="323"/>
        <end position="343"/>
    </location>
</feature>
<feature type="transmembrane region" description="Helical" evidence="1">
    <location>
        <begin position="347"/>
        <end position="367"/>
    </location>
</feature>
<feature type="transmembrane region" description="Helical" evidence="1">
    <location>
        <begin position="395"/>
        <end position="415"/>
    </location>
</feature>
<feature type="transmembrane region" description="Helical" evidence="1">
    <location>
        <begin position="418"/>
        <end position="438"/>
    </location>
</feature>
<feature type="transmembrane region" description="Helical" evidence="1">
    <location>
        <begin position="484"/>
        <end position="504"/>
    </location>
</feature>
<accession>P0CC25</accession>
<accession>Q70XV5</accession>
<geneLocation type="chloroplast"/>
<protein>
    <recommendedName>
        <fullName evidence="1">NAD(P)H-quinone oxidoreductase subunit 2 A, chloroplastic</fullName>
        <ecNumber evidence="1">7.1.1.-</ecNumber>
    </recommendedName>
    <alternativeName>
        <fullName evidence="1">NAD(P)H dehydrogenase, subunit 2 A</fullName>
    </alternativeName>
    <alternativeName>
        <fullName evidence="1">NADH-plastoquinone oxidoreductase subunit 2 A</fullName>
    </alternativeName>
</protein>
<proteinExistence type="inferred from homology"/>
<sequence>MIWHVQNENFILDSTRIFMKAFHLLLFHGSFIFPECILIFGLILLLMIDSTSDQKDRPWFYFISSTSLVMSITALLFRWREEPMISFSGNFQTNNFNEIFQFLILLCSTLCIPLSVEYIECTEMAITEFLLFVLTATLGGMFLCGANDLITIFVAPECFSLCSYLLSGYTKRDVRSNEATTKYLLMGGASSSILVHGFSWLYGSSGGEIELQEIVNGLINTQMYNSPGISIALLSITVGIGFKLSPAPFHQWTPDVYEGSPTPVVAFLSVTSKVAASALATRIFDIPFYFSSNEWHLLLEILAILSMILGNLIAITQTSMKRMLAYSSIGQIGYVIIGIIVGDSNDGYASMITYMLFYISMNLGTFARIVSFGPRTGTDNIRDYAGLYTKDPFLALSSALCLLSLGGIPPLAGFFGKLHLFWCGWQAGLYFLVSIGLLTSVVSIYYYLKIIKLLMTGRNKEITPHVRNYRRSPLRSNNSIELSMIVCVIASTIPGISMNPIIAIAQDTFF</sequence>
<reference key="1">
    <citation type="journal article" date="2003" name="Mol. Biol. Evol.">
        <title>Analysis of the Amborella trichopoda chloroplast genome sequence suggests that Amborella is not a basal angiosperm.</title>
        <authorList>
            <person name="Goremykin V.V."/>
            <person name="Hirsch-Ernst K.I."/>
            <person name="Wolfl S."/>
            <person name="Hellwig F.H."/>
        </authorList>
    </citation>
    <scope>NUCLEOTIDE SEQUENCE [LARGE SCALE GENOMIC DNA]</scope>
</reference>
<comment type="function">
    <text evidence="1">NDH shuttles electrons from NAD(P)H:plastoquinone, via FMN and iron-sulfur (Fe-S) centers, to quinones in the photosynthetic chain and possibly in a chloroplast respiratory chain. The immediate electron acceptor for the enzyme in this species is believed to be plastoquinone. Couples the redox reaction to proton translocation, and thus conserves the redox energy in a proton gradient.</text>
</comment>
<comment type="catalytic activity">
    <reaction evidence="1">
        <text>a plastoquinone + NADH + (n+1) H(+)(in) = a plastoquinol + NAD(+) + n H(+)(out)</text>
        <dbReference type="Rhea" id="RHEA:42608"/>
        <dbReference type="Rhea" id="RHEA-COMP:9561"/>
        <dbReference type="Rhea" id="RHEA-COMP:9562"/>
        <dbReference type="ChEBI" id="CHEBI:15378"/>
        <dbReference type="ChEBI" id="CHEBI:17757"/>
        <dbReference type="ChEBI" id="CHEBI:57540"/>
        <dbReference type="ChEBI" id="CHEBI:57945"/>
        <dbReference type="ChEBI" id="CHEBI:62192"/>
    </reaction>
</comment>
<comment type="catalytic activity">
    <reaction evidence="1">
        <text>a plastoquinone + NADPH + (n+1) H(+)(in) = a plastoquinol + NADP(+) + n H(+)(out)</text>
        <dbReference type="Rhea" id="RHEA:42612"/>
        <dbReference type="Rhea" id="RHEA-COMP:9561"/>
        <dbReference type="Rhea" id="RHEA-COMP:9562"/>
        <dbReference type="ChEBI" id="CHEBI:15378"/>
        <dbReference type="ChEBI" id="CHEBI:17757"/>
        <dbReference type="ChEBI" id="CHEBI:57783"/>
        <dbReference type="ChEBI" id="CHEBI:58349"/>
        <dbReference type="ChEBI" id="CHEBI:62192"/>
    </reaction>
</comment>
<comment type="subunit">
    <text evidence="1">NDH is composed of at least 16 different subunits, 5 of which are encoded in the nucleus.</text>
</comment>
<comment type="subcellular location">
    <subcellularLocation>
        <location evidence="1">Plastid</location>
        <location evidence="1">Chloroplast thylakoid membrane</location>
        <topology evidence="1">Multi-pass membrane protein</topology>
    </subcellularLocation>
</comment>
<comment type="similarity">
    <text evidence="1">Belongs to the complex I subunit 2 family.</text>
</comment>
<keyword id="KW-0150">Chloroplast</keyword>
<keyword id="KW-0472">Membrane</keyword>
<keyword id="KW-0520">NAD</keyword>
<keyword id="KW-0521">NADP</keyword>
<keyword id="KW-0934">Plastid</keyword>
<keyword id="KW-0618">Plastoquinone</keyword>
<keyword id="KW-0874">Quinone</keyword>
<keyword id="KW-1185">Reference proteome</keyword>
<keyword id="KW-0793">Thylakoid</keyword>
<keyword id="KW-1278">Translocase</keyword>
<keyword id="KW-0812">Transmembrane</keyword>
<keyword id="KW-1133">Transmembrane helix</keyword>
<keyword id="KW-0813">Transport</keyword>
<evidence type="ECO:0000255" key="1">
    <source>
        <dbReference type="HAMAP-Rule" id="MF_00445"/>
    </source>
</evidence>